<organism>
    <name type="scientific">Burkholderia cenocepacia (strain HI2424)</name>
    <dbReference type="NCBI Taxonomy" id="331272"/>
    <lineage>
        <taxon>Bacteria</taxon>
        <taxon>Pseudomonadati</taxon>
        <taxon>Pseudomonadota</taxon>
        <taxon>Betaproteobacteria</taxon>
        <taxon>Burkholderiales</taxon>
        <taxon>Burkholderiaceae</taxon>
        <taxon>Burkholderia</taxon>
        <taxon>Burkholderia cepacia complex</taxon>
    </lineage>
</organism>
<name>MURC_BURCH</name>
<dbReference type="EC" id="6.3.2.8" evidence="1"/>
<dbReference type="EMBL" id="CP000458">
    <property type="protein sequence ID" value="ABK07314.1"/>
    <property type="molecule type" value="Genomic_DNA"/>
</dbReference>
<dbReference type="RefSeq" id="WP_011544502.1">
    <property type="nucleotide sequence ID" value="NC_008542.1"/>
</dbReference>
<dbReference type="SMR" id="A0K487"/>
<dbReference type="KEGG" id="bch:Bcen2424_0560"/>
<dbReference type="HOGENOM" id="CLU_028104_2_2_4"/>
<dbReference type="UniPathway" id="UPA00219"/>
<dbReference type="GO" id="GO:0005737">
    <property type="term" value="C:cytoplasm"/>
    <property type="evidence" value="ECO:0007669"/>
    <property type="project" value="UniProtKB-SubCell"/>
</dbReference>
<dbReference type="GO" id="GO:0005524">
    <property type="term" value="F:ATP binding"/>
    <property type="evidence" value="ECO:0007669"/>
    <property type="project" value="UniProtKB-UniRule"/>
</dbReference>
<dbReference type="GO" id="GO:0008763">
    <property type="term" value="F:UDP-N-acetylmuramate-L-alanine ligase activity"/>
    <property type="evidence" value="ECO:0007669"/>
    <property type="project" value="UniProtKB-UniRule"/>
</dbReference>
<dbReference type="GO" id="GO:0051301">
    <property type="term" value="P:cell division"/>
    <property type="evidence" value="ECO:0007669"/>
    <property type="project" value="UniProtKB-KW"/>
</dbReference>
<dbReference type="GO" id="GO:0071555">
    <property type="term" value="P:cell wall organization"/>
    <property type="evidence" value="ECO:0007669"/>
    <property type="project" value="UniProtKB-KW"/>
</dbReference>
<dbReference type="GO" id="GO:0009252">
    <property type="term" value="P:peptidoglycan biosynthetic process"/>
    <property type="evidence" value="ECO:0007669"/>
    <property type="project" value="UniProtKB-UniRule"/>
</dbReference>
<dbReference type="GO" id="GO:0008360">
    <property type="term" value="P:regulation of cell shape"/>
    <property type="evidence" value="ECO:0007669"/>
    <property type="project" value="UniProtKB-KW"/>
</dbReference>
<dbReference type="FunFam" id="3.40.1190.10:FF:000001">
    <property type="entry name" value="UDP-N-acetylmuramate--L-alanine ligase"/>
    <property type="match status" value="1"/>
</dbReference>
<dbReference type="Gene3D" id="3.90.190.20">
    <property type="entry name" value="Mur ligase, C-terminal domain"/>
    <property type="match status" value="1"/>
</dbReference>
<dbReference type="Gene3D" id="3.40.1190.10">
    <property type="entry name" value="Mur-like, catalytic domain"/>
    <property type="match status" value="1"/>
</dbReference>
<dbReference type="Gene3D" id="3.40.50.720">
    <property type="entry name" value="NAD(P)-binding Rossmann-like Domain"/>
    <property type="match status" value="1"/>
</dbReference>
<dbReference type="HAMAP" id="MF_00046">
    <property type="entry name" value="MurC"/>
    <property type="match status" value="1"/>
</dbReference>
<dbReference type="InterPro" id="IPR036565">
    <property type="entry name" value="Mur-like_cat_sf"/>
</dbReference>
<dbReference type="InterPro" id="IPR004101">
    <property type="entry name" value="Mur_ligase_C"/>
</dbReference>
<dbReference type="InterPro" id="IPR036615">
    <property type="entry name" value="Mur_ligase_C_dom_sf"/>
</dbReference>
<dbReference type="InterPro" id="IPR013221">
    <property type="entry name" value="Mur_ligase_cen"/>
</dbReference>
<dbReference type="InterPro" id="IPR000713">
    <property type="entry name" value="Mur_ligase_N"/>
</dbReference>
<dbReference type="InterPro" id="IPR050061">
    <property type="entry name" value="MurCDEF_pg_biosynth"/>
</dbReference>
<dbReference type="InterPro" id="IPR005758">
    <property type="entry name" value="UDP-N-AcMur_Ala_ligase_MurC"/>
</dbReference>
<dbReference type="NCBIfam" id="TIGR01082">
    <property type="entry name" value="murC"/>
    <property type="match status" value="1"/>
</dbReference>
<dbReference type="PANTHER" id="PTHR43445:SF3">
    <property type="entry name" value="UDP-N-ACETYLMURAMATE--L-ALANINE LIGASE"/>
    <property type="match status" value="1"/>
</dbReference>
<dbReference type="PANTHER" id="PTHR43445">
    <property type="entry name" value="UDP-N-ACETYLMURAMATE--L-ALANINE LIGASE-RELATED"/>
    <property type="match status" value="1"/>
</dbReference>
<dbReference type="Pfam" id="PF01225">
    <property type="entry name" value="Mur_ligase"/>
    <property type="match status" value="1"/>
</dbReference>
<dbReference type="Pfam" id="PF02875">
    <property type="entry name" value="Mur_ligase_C"/>
    <property type="match status" value="1"/>
</dbReference>
<dbReference type="Pfam" id="PF08245">
    <property type="entry name" value="Mur_ligase_M"/>
    <property type="match status" value="1"/>
</dbReference>
<dbReference type="SUPFAM" id="SSF51984">
    <property type="entry name" value="MurCD N-terminal domain"/>
    <property type="match status" value="1"/>
</dbReference>
<dbReference type="SUPFAM" id="SSF53623">
    <property type="entry name" value="MurD-like peptide ligases, catalytic domain"/>
    <property type="match status" value="1"/>
</dbReference>
<dbReference type="SUPFAM" id="SSF53244">
    <property type="entry name" value="MurD-like peptide ligases, peptide-binding domain"/>
    <property type="match status" value="1"/>
</dbReference>
<proteinExistence type="inferred from homology"/>
<accession>A0K487</accession>
<gene>
    <name evidence="1" type="primary">murC</name>
    <name type="ordered locus">Bcen2424_0560</name>
</gene>
<feature type="chain" id="PRO_1000004318" description="UDP-N-acetylmuramate--L-alanine ligase">
    <location>
        <begin position="1"/>
        <end position="465"/>
    </location>
</feature>
<feature type="binding site" evidence="1">
    <location>
        <begin position="112"/>
        <end position="118"/>
    </location>
    <ligand>
        <name>ATP</name>
        <dbReference type="ChEBI" id="CHEBI:30616"/>
    </ligand>
</feature>
<reference key="1">
    <citation type="submission" date="2006-08" db="EMBL/GenBank/DDBJ databases">
        <title>Complete sequence of chromosome 1 of Burkholderia cenocepacia HI2424.</title>
        <authorList>
            <person name="Copeland A."/>
            <person name="Lucas S."/>
            <person name="Lapidus A."/>
            <person name="Barry K."/>
            <person name="Detter J.C."/>
            <person name="Glavina del Rio T."/>
            <person name="Hammon N."/>
            <person name="Israni S."/>
            <person name="Pitluck S."/>
            <person name="Chain P."/>
            <person name="Malfatti S."/>
            <person name="Shin M."/>
            <person name="Vergez L."/>
            <person name="Schmutz J."/>
            <person name="Larimer F."/>
            <person name="Land M."/>
            <person name="Hauser L."/>
            <person name="Kyrpides N."/>
            <person name="Kim E."/>
            <person name="LiPuma J.J."/>
            <person name="Gonzalez C.F."/>
            <person name="Konstantinidis K."/>
            <person name="Tiedje J.M."/>
            <person name="Richardson P."/>
        </authorList>
    </citation>
    <scope>NUCLEOTIDE SEQUENCE [LARGE SCALE GENOMIC DNA]</scope>
    <source>
        <strain>HI2424</strain>
    </source>
</reference>
<comment type="function">
    <text evidence="1">Cell wall formation.</text>
</comment>
<comment type="catalytic activity">
    <reaction evidence="1">
        <text>UDP-N-acetyl-alpha-D-muramate + L-alanine + ATP = UDP-N-acetyl-alpha-D-muramoyl-L-alanine + ADP + phosphate + H(+)</text>
        <dbReference type="Rhea" id="RHEA:23372"/>
        <dbReference type="ChEBI" id="CHEBI:15378"/>
        <dbReference type="ChEBI" id="CHEBI:30616"/>
        <dbReference type="ChEBI" id="CHEBI:43474"/>
        <dbReference type="ChEBI" id="CHEBI:57972"/>
        <dbReference type="ChEBI" id="CHEBI:70757"/>
        <dbReference type="ChEBI" id="CHEBI:83898"/>
        <dbReference type="ChEBI" id="CHEBI:456216"/>
        <dbReference type="EC" id="6.3.2.8"/>
    </reaction>
</comment>
<comment type="pathway">
    <text evidence="1">Cell wall biogenesis; peptidoglycan biosynthesis.</text>
</comment>
<comment type="subcellular location">
    <subcellularLocation>
        <location evidence="1">Cytoplasm</location>
    </subcellularLocation>
</comment>
<comment type="similarity">
    <text evidence="1">Belongs to the MurCDEF family.</text>
</comment>
<sequence>MKHIVKHIHFVGIGGAGMSGIAEVLVNLGYAVSGSDLSRNAVTDRLEALGARIAIGHDAANIEGANAVVVSTAVRSDNPEVLAARHQGVPIVQRAVMLAELMRLKQGIAIAGTHGKTTTTSLVASVLAAGGLDPTFVIGGRLISAGANARLGTGDFIVAEADESDASFLNLYPVIEVITNIDADHMDTYGHDFARLKQAFIEFTQRLPFYGSAVVCVDDPNVRQIIPFISKPVVRYGLSPDAQVRAEDIDARDGRMHFTVIREGRAPLAVVLNMPGLHNVQNALAAIAIATDLGVSDDAIQLALAEFNGVGRRFQRYGEVPSADGGQYTLIDDYGHHPVEMAATIAAARGAFPGRRLVLAFQPHRYTRTRDCFDDFVNVLSTVDALVLTEVYAAGEAAIPTASGDALSRALRAVGKVDPVFVATVDDVPDALAKVAQNGDVVITMGAGSIGGVPAKLVQHIQQKA</sequence>
<protein>
    <recommendedName>
        <fullName evidence="1">UDP-N-acetylmuramate--L-alanine ligase</fullName>
        <ecNumber evidence="1">6.3.2.8</ecNumber>
    </recommendedName>
    <alternativeName>
        <fullName evidence="1">UDP-N-acetylmuramoyl-L-alanine synthetase</fullName>
    </alternativeName>
</protein>
<keyword id="KW-0067">ATP-binding</keyword>
<keyword id="KW-0131">Cell cycle</keyword>
<keyword id="KW-0132">Cell division</keyword>
<keyword id="KW-0133">Cell shape</keyword>
<keyword id="KW-0961">Cell wall biogenesis/degradation</keyword>
<keyword id="KW-0963">Cytoplasm</keyword>
<keyword id="KW-0436">Ligase</keyword>
<keyword id="KW-0547">Nucleotide-binding</keyword>
<keyword id="KW-0573">Peptidoglycan synthesis</keyword>
<evidence type="ECO:0000255" key="1">
    <source>
        <dbReference type="HAMAP-Rule" id="MF_00046"/>
    </source>
</evidence>